<protein>
    <recommendedName>
        <fullName evidence="1">NAD(P)H-quinone oxidoreductase subunit 2, chloroplastic</fullName>
        <ecNumber evidence="1">7.1.1.-</ecNumber>
    </recommendedName>
    <alternativeName>
        <fullName evidence="1">NAD(P)H dehydrogenase, subunit 2</fullName>
    </alternativeName>
    <alternativeName>
        <fullName evidence="1">NADH-plastoquinone oxidoreductase subunit 2</fullName>
    </alternativeName>
</protein>
<geneLocation type="chloroplast"/>
<reference key="1">
    <citation type="submission" date="2002-09" db="EMBL/GenBank/DDBJ databases">
        <title>Phylogenetic relationships among the major lineages of Asparagales based on a large chloroplast data set.</title>
        <authorList>
            <person name="McPherson M.A."/>
            <person name="Rai H.S."/>
            <person name="Wong W.A."/>
            <person name="Graham S.W."/>
        </authorList>
    </citation>
    <scope>NUCLEOTIDE SEQUENCE [GENOMIC DNA]</scope>
</reference>
<evidence type="ECO:0000255" key="1">
    <source>
        <dbReference type="HAMAP-Rule" id="MF_00445"/>
    </source>
</evidence>
<evidence type="ECO:0000305" key="2"/>
<accession>Q67ID9</accession>
<sequence length="510" mass="56775">MIWHVQNENFILDSTRIFMKAFHLLLFHGSFIFPECILIFGLILLLMIDSTSDQKDRPWFYFISSTSLVMSITALLFRWKEEPIISFSGNFQTNNFNEIFQFLILLCSTLCIPLSVEYIECTEMAITEFLLFVLTATLGGMFLCGANDLITIFVAPECFSLCSYLLSGYTKRDVRSNEATTKYLLMGGASSSILVHGFSWLYGSSGGEIELQEIVNGLINTQMYNSPGISIALISITVGIGFKLSPAPFHQWTPDVYEGSPTPVVAFLSVTSKVAASASATRIFDIPFYFSSNEWHLLLEILAILSMILGNLIAITQTSMKRMLAYSSIGQIGYVIIGIIVGDSNDGYASMITYMLFYISMNLGTFACIVSFGLRTGTDNIRDYAGLYTKDPFLALSLALCLLSLGGLPPLAGFFGKLYLFWCGWQAGLYFLVSMGLLTSVVSIYYYLKIIKLLMTGRNQEITPHVRNYRRSTLRSNNSIEWSMTVCVIASTIPGISMNPILAIAQDTLF</sequence>
<keyword id="KW-0150">Chloroplast</keyword>
<keyword id="KW-0472">Membrane</keyword>
<keyword id="KW-0520">NAD</keyword>
<keyword id="KW-0521">NADP</keyword>
<keyword id="KW-0934">Plastid</keyword>
<keyword id="KW-0618">Plastoquinone</keyword>
<keyword id="KW-0874">Quinone</keyword>
<keyword id="KW-0793">Thylakoid</keyword>
<keyword id="KW-1278">Translocase</keyword>
<keyword id="KW-0812">Transmembrane</keyword>
<keyword id="KW-1133">Transmembrane helix</keyword>
<keyword id="KW-0813">Transport</keyword>
<feature type="chain" id="PRO_0000117677" description="NAD(P)H-quinone oxidoreductase subunit 2, chloroplastic">
    <location>
        <begin position="1"/>
        <end position="510"/>
    </location>
</feature>
<feature type="transmembrane region" description="Helical" evidence="1">
    <location>
        <begin position="24"/>
        <end position="44"/>
    </location>
</feature>
<feature type="transmembrane region" description="Helical" evidence="1">
    <location>
        <begin position="59"/>
        <end position="79"/>
    </location>
</feature>
<feature type="transmembrane region" description="Helical" evidence="1">
    <location>
        <begin position="99"/>
        <end position="119"/>
    </location>
</feature>
<feature type="transmembrane region" description="Helical" evidence="1">
    <location>
        <begin position="124"/>
        <end position="144"/>
    </location>
</feature>
<feature type="transmembrane region" description="Helical" evidence="1">
    <location>
        <begin position="149"/>
        <end position="169"/>
    </location>
</feature>
<feature type="transmembrane region" description="Helical" evidence="1">
    <location>
        <begin position="183"/>
        <end position="203"/>
    </location>
</feature>
<feature type="transmembrane region" description="Helical" evidence="1">
    <location>
        <begin position="229"/>
        <end position="249"/>
    </location>
</feature>
<feature type="transmembrane region" description="Helical" evidence="1">
    <location>
        <begin position="295"/>
        <end position="315"/>
    </location>
</feature>
<feature type="transmembrane region" description="Helical" evidence="1">
    <location>
        <begin position="323"/>
        <end position="343"/>
    </location>
</feature>
<feature type="transmembrane region" description="Helical" evidence="1">
    <location>
        <begin position="354"/>
        <end position="374"/>
    </location>
</feature>
<feature type="transmembrane region" description="Helical" evidence="1">
    <location>
        <begin position="395"/>
        <end position="415"/>
    </location>
</feature>
<feature type="transmembrane region" description="Helical" evidence="1">
    <location>
        <begin position="418"/>
        <end position="438"/>
    </location>
</feature>
<feature type="transmembrane region" description="Helical" evidence="1">
    <location>
        <begin position="484"/>
        <end position="504"/>
    </location>
</feature>
<gene>
    <name evidence="1" type="primary">ndhB</name>
</gene>
<organism>
    <name type="scientific">Sisyrinchium montanum</name>
    <name type="common">Strict blue-eyed grass</name>
    <dbReference type="NCBI Taxonomy" id="207934"/>
    <lineage>
        <taxon>Eukaryota</taxon>
        <taxon>Viridiplantae</taxon>
        <taxon>Streptophyta</taxon>
        <taxon>Embryophyta</taxon>
        <taxon>Tracheophyta</taxon>
        <taxon>Spermatophyta</taxon>
        <taxon>Magnoliopsida</taxon>
        <taxon>Liliopsida</taxon>
        <taxon>Asparagales</taxon>
        <taxon>Iridaceae</taxon>
        <taxon>Iridoideae</taxon>
        <taxon>Sisyrinchieae</taxon>
        <taxon>Sisyrinchium</taxon>
    </lineage>
</organism>
<dbReference type="EC" id="7.1.1.-" evidence="1"/>
<dbReference type="EMBL" id="AY147486">
    <property type="protein sequence ID" value="AAN32064.1"/>
    <property type="status" value="ALT_INIT"/>
    <property type="molecule type" value="Genomic_DNA"/>
</dbReference>
<dbReference type="SMR" id="Q67ID9"/>
<dbReference type="GO" id="GO:0009535">
    <property type="term" value="C:chloroplast thylakoid membrane"/>
    <property type="evidence" value="ECO:0007669"/>
    <property type="project" value="UniProtKB-SubCell"/>
</dbReference>
<dbReference type="GO" id="GO:0008137">
    <property type="term" value="F:NADH dehydrogenase (ubiquinone) activity"/>
    <property type="evidence" value="ECO:0007669"/>
    <property type="project" value="InterPro"/>
</dbReference>
<dbReference type="GO" id="GO:0048038">
    <property type="term" value="F:quinone binding"/>
    <property type="evidence" value="ECO:0007669"/>
    <property type="project" value="UniProtKB-KW"/>
</dbReference>
<dbReference type="GO" id="GO:0042773">
    <property type="term" value="P:ATP synthesis coupled electron transport"/>
    <property type="evidence" value="ECO:0007669"/>
    <property type="project" value="InterPro"/>
</dbReference>
<dbReference type="GO" id="GO:0019684">
    <property type="term" value="P:photosynthesis, light reaction"/>
    <property type="evidence" value="ECO:0007669"/>
    <property type="project" value="UniProtKB-UniRule"/>
</dbReference>
<dbReference type="HAMAP" id="MF_00445">
    <property type="entry name" value="NDH1_NuoN_1"/>
    <property type="match status" value="1"/>
</dbReference>
<dbReference type="InterPro" id="IPR010096">
    <property type="entry name" value="NADH-Q_OxRdtase_suN/2"/>
</dbReference>
<dbReference type="InterPro" id="IPR001750">
    <property type="entry name" value="ND/Mrp_TM"/>
</dbReference>
<dbReference type="InterPro" id="IPR045693">
    <property type="entry name" value="Ndh2_N"/>
</dbReference>
<dbReference type="NCBIfam" id="TIGR01770">
    <property type="entry name" value="NDH_I_N"/>
    <property type="match status" value="1"/>
</dbReference>
<dbReference type="NCBIfam" id="NF002701">
    <property type="entry name" value="PRK02504.1"/>
    <property type="match status" value="1"/>
</dbReference>
<dbReference type="PANTHER" id="PTHR22773">
    <property type="entry name" value="NADH DEHYDROGENASE"/>
    <property type="match status" value="1"/>
</dbReference>
<dbReference type="Pfam" id="PF19530">
    <property type="entry name" value="Ndh2_N"/>
    <property type="match status" value="1"/>
</dbReference>
<dbReference type="Pfam" id="PF00361">
    <property type="entry name" value="Proton_antipo_M"/>
    <property type="match status" value="1"/>
</dbReference>
<dbReference type="PRINTS" id="PR01434">
    <property type="entry name" value="NADHDHGNASE5"/>
</dbReference>
<proteinExistence type="inferred from homology"/>
<name>NU2C_SISMO</name>
<comment type="function">
    <text evidence="1">NDH shuttles electrons from NAD(P)H:plastoquinone, via FMN and iron-sulfur (Fe-S) centers, to quinones in the photosynthetic chain and possibly in a chloroplast respiratory chain. The immediate electron acceptor for the enzyme in this species is believed to be plastoquinone. Couples the redox reaction to proton translocation, and thus conserves the redox energy in a proton gradient.</text>
</comment>
<comment type="catalytic activity">
    <reaction evidence="1">
        <text>a plastoquinone + NADH + (n+1) H(+)(in) = a plastoquinol + NAD(+) + n H(+)(out)</text>
        <dbReference type="Rhea" id="RHEA:42608"/>
        <dbReference type="Rhea" id="RHEA-COMP:9561"/>
        <dbReference type="Rhea" id="RHEA-COMP:9562"/>
        <dbReference type="ChEBI" id="CHEBI:15378"/>
        <dbReference type="ChEBI" id="CHEBI:17757"/>
        <dbReference type="ChEBI" id="CHEBI:57540"/>
        <dbReference type="ChEBI" id="CHEBI:57945"/>
        <dbReference type="ChEBI" id="CHEBI:62192"/>
    </reaction>
</comment>
<comment type="catalytic activity">
    <reaction evidence="1">
        <text>a plastoquinone + NADPH + (n+1) H(+)(in) = a plastoquinol + NADP(+) + n H(+)(out)</text>
        <dbReference type="Rhea" id="RHEA:42612"/>
        <dbReference type="Rhea" id="RHEA-COMP:9561"/>
        <dbReference type="Rhea" id="RHEA-COMP:9562"/>
        <dbReference type="ChEBI" id="CHEBI:15378"/>
        <dbReference type="ChEBI" id="CHEBI:17757"/>
        <dbReference type="ChEBI" id="CHEBI:57783"/>
        <dbReference type="ChEBI" id="CHEBI:58349"/>
        <dbReference type="ChEBI" id="CHEBI:62192"/>
    </reaction>
</comment>
<comment type="subunit">
    <text evidence="1">NDH is composed of at least 16 different subunits, 5 of which are encoded in the nucleus.</text>
</comment>
<comment type="subcellular location">
    <subcellularLocation>
        <location evidence="1">Plastid</location>
        <location evidence="1">Chloroplast thylakoid membrane</location>
        <topology evidence="1">Multi-pass membrane protein</topology>
    </subcellularLocation>
</comment>
<comment type="similarity">
    <text evidence="1">Belongs to the complex I subunit 2 family.</text>
</comment>
<comment type="sequence caution" evidence="2">
    <conflict type="erroneous initiation">
        <sequence resource="EMBL-CDS" id="AAN32064"/>
    </conflict>
</comment>